<reference key="1">
    <citation type="journal article" date="2002" name="Nature">
        <title>The genome sequence of Schizosaccharomyces pombe.</title>
        <authorList>
            <person name="Wood V."/>
            <person name="Gwilliam R."/>
            <person name="Rajandream M.A."/>
            <person name="Lyne M.H."/>
            <person name="Lyne R."/>
            <person name="Stewart A."/>
            <person name="Sgouros J.G."/>
            <person name="Peat N."/>
            <person name="Hayles J."/>
            <person name="Baker S.G."/>
            <person name="Basham D."/>
            <person name="Bowman S."/>
            <person name="Brooks K."/>
            <person name="Brown D."/>
            <person name="Brown S."/>
            <person name="Chillingworth T."/>
            <person name="Churcher C.M."/>
            <person name="Collins M."/>
            <person name="Connor R."/>
            <person name="Cronin A."/>
            <person name="Davis P."/>
            <person name="Feltwell T."/>
            <person name="Fraser A."/>
            <person name="Gentles S."/>
            <person name="Goble A."/>
            <person name="Hamlin N."/>
            <person name="Harris D.E."/>
            <person name="Hidalgo J."/>
            <person name="Hodgson G."/>
            <person name="Holroyd S."/>
            <person name="Hornsby T."/>
            <person name="Howarth S."/>
            <person name="Huckle E.J."/>
            <person name="Hunt S."/>
            <person name="Jagels K."/>
            <person name="James K.D."/>
            <person name="Jones L."/>
            <person name="Jones M."/>
            <person name="Leather S."/>
            <person name="McDonald S."/>
            <person name="McLean J."/>
            <person name="Mooney P."/>
            <person name="Moule S."/>
            <person name="Mungall K.L."/>
            <person name="Murphy L.D."/>
            <person name="Niblett D."/>
            <person name="Odell C."/>
            <person name="Oliver K."/>
            <person name="O'Neil S."/>
            <person name="Pearson D."/>
            <person name="Quail M.A."/>
            <person name="Rabbinowitsch E."/>
            <person name="Rutherford K.M."/>
            <person name="Rutter S."/>
            <person name="Saunders D."/>
            <person name="Seeger K."/>
            <person name="Sharp S."/>
            <person name="Skelton J."/>
            <person name="Simmonds M.N."/>
            <person name="Squares R."/>
            <person name="Squares S."/>
            <person name="Stevens K."/>
            <person name="Taylor K."/>
            <person name="Taylor R.G."/>
            <person name="Tivey A."/>
            <person name="Walsh S.V."/>
            <person name="Warren T."/>
            <person name="Whitehead S."/>
            <person name="Woodward J.R."/>
            <person name="Volckaert G."/>
            <person name="Aert R."/>
            <person name="Robben J."/>
            <person name="Grymonprez B."/>
            <person name="Weltjens I."/>
            <person name="Vanstreels E."/>
            <person name="Rieger M."/>
            <person name="Schaefer M."/>
            <person name="Mueller-Auer S."/>
            <person name="Gabel C."/>
            <person name="Fuchs M."/>
            <person name="Duesterhoeft A."/>
            <person name="Fritzc C."/>
            <person name="Holzer E."/>
            <person name="Moestl D."/>
            <person name="Hilbert H."/>
            <person name="Borzym K."/>
            <person name="Langer I."/>
            <person name="Beck A."/>
            <person name="Lehrach H."/>
            <person name="Reinhardt R."/>
            <person name="Pohl T.M."/>
            <person name="Eger P."/>
            <person name="Zimmermann W."/>
            <person name="Wedler H."/>
            <person name="Wambutt R."/>
            <person name="Purnelle B."/>
            <person name="Goffeau A."/>
            <person name="Cadieu E."/>
            <person name="Dreano S."/>
            <person name="Gloux S."/>
            <person name="Lelaure V."/>
            <person name="Mottier S."/>
            <person name="Galibert F."/>
            <person name="Aves S.J."/>
            <person name="Xiang Z."/>
            <person name="Hunt C."/>
            <person name="Moore K."/>
            <person name="Hurst S.M."/>
            <person name="Lucas M."/>
            <person name="Rochet M."/>
            <person name="Gaillardin C."/>
            <person name="Tallada V.A."/>
            <person name="Garzon A."/>
            <person name="Thode G."/>
            <person name="Daga R.R."/>
            <person name="Cruzado L."/>
            <person name="Jimenez J."/>
            <person name="Sanchez M."/>
            <person name="del Rey F."/>
            <person name="Benito J."/>
            <person name="Dominguez A."/>
            <person name="Revuelta J.L."/>
            <person name="Moreno S."/>
            <person name="Armstrong J."/>
            <person name="Forsburg S.L."/>
            <person name="Cerutti L."/>
            <person name="Lowe T."/>
            <person name="McCombie W.R."/>
            <person name="Paulsen I."/>
            <person name="Potashkin J."/>
            <person name="Shpakovski G.V."/>
            <person name="Ussery D."/>
            <person name="Barrell B.G."/>
            <person name="Nurse P."/>
        </authorList>
    </citation>
    <scope>NUCLEOTIDE SEQUENCE [LARGE SCALE GENOMIC DNA]</scope>
    <source>
        <strain>972 / ATCC 24843</strain>
    </source>
</reference>
<reference key="2">
    <citation type="journal article" date="2021" name="Nucleic Acids Res.">
        <title>Translational activators and mitoribosomal isoforms cooperate to mediate mRNA-specific translation in Schizosaccharomyces pombe mitochondria.</title>
        <authorList>
            <person name="Herbert C.J."/>
            <person name="Labarre-Mariotte S."/>
            <person name="Cornu D."/>
            <person name="Sophie C."/>
            <person name="Panozzo C."/>
            <person name="Michel T."/>
            <person name="Dujardin G."/>
            <person name="Bonnefoy N."/>
        </authorList>
    </citation>
    <scope>IDENTIFICATION IN THE MRH5C COMPLEX</scope>
</reference>
<reference key="3">
    <citation type="journal article" date="2024" name="J. Biol. Chem.">
        <title>Sls1 and Mtf2 mediate the assembly of the Mrh5C complex required for activation of cox1 mRNA translation.</title>
        <authorList>
            <person name="Wang Y."/>
            <person name="Jin T."/>
            <person name="Huang Y."/>
        </authorList>
    </citation>
    <scope>FUNCTION</scope>
    <scope>IDENTIFICATION IN THE MRH5C COMPLEX</scope>
    <scope>SUBUNIT</scope>
    <scope>DISRUPTION PHENOTYPE</scope>
</reference>
<comment type="function">
    <text evidence="3">Translation activation factor that as part of the MRH5C complex specifically recruits cox1 mRNA to the mitochondrial ribosome for translation initiation.</text>
</comment>
<comment type="subunit">
    <text evidence="2 3">Component of the MRH5C complex, composed of mrh5, ppr4, mtf2, and sls1 (PubMed:34634819, PubMed:38499152). Proteins mtf2 and sls1 form a subcomplex that serves as a scaffold to bring mrh5 and ppr4 together (PubMed:38499152). The MRH5C complex associates with the small subunit of the mitochondrial ribosome (PubMed:38499152).</text>
</comment>
<comment type="disruption phenotype">
    <text evidence="3">Decreases the association of cox1, but not cob1, mRNA with the mitochondrial small ribosomal subunit.</text>
</comment>
<dbReference type="EMBL" id="CU329670">
    <property type="protein sequence ID" value="CAB10859.1"/>
    <property type="molecule type" value="Genomic_DNA"/>
</dbReference>
<dbReference type="PIR" id="T38955">
    <property type="entry name" value="T38955"/>
</dbReference>
<dbReference type="RefSeq" id="NP_593358.1">
    <property type="nucleotide sequence ID" value="NM_001018790.2"/>
</dbReference>
<dbReference type="ComplexPortal" id="CPX-25771">
    <property type="entry name" value="MRH5C complex"/>
</dbReference>
<dbReference type="FunCoup" id="O14204">
    <property type="interactions" value="196"/>
</dbReference>
<dbReference type="STRING" id="284812.O14204"/>
<dbReference type="iPTMnet" id="O14204"/>
<dbReference type="PaxDb" id="4896-SPAC5D6.12.1"/>
<dbReference type="EnsemblFungi" id="SPAC5D6.12.1">
    <property type="protein sequence ID" value="SPAC5D6.12.1:pep"/>
    <property type="gene ID" value="SPAC5D6.12"/>
</dbReference>
<dbReference type="GeneID" id="2541966"/>
<dbReference type="KEGG" id="spo:2541966"/>
<dbReference type="PomBase" id="SPAC5D6.12">
    <property type="gene designation" value="mtf2"/>
</dbReference>
<dbReference type="VEuPathDB" id="FungiDB:SPAC5D6.12"/>
<dbReference type="eggNOG" id="ENOG502S7AT">
    <property type="taxonomic scope" value="Eukaryota"/>
</dbReference>
<dbReference type="HOGENOM" id="CLU_814222_0_0_1"/>
<dbReference type="InParanoid" id="O14204"/>
<dbReference type="OMA" id="MCLISRF"/>
<dbReference type="PRO" id="PR:O14204"/>
<dbReference type="Proteomes" id="UP000002485">
    <property type="component" value="Chromosome I"/>
</dbReference>
<dbReference type="GO" id="GO:0005759">
    <property type="term" value="C:mitochondrial matrix"/>
    <property type="evidence" value="ECO:0000305"/>
    <property type="project" value="PomBase"/>
</dbReference>
<dbReference type="GO" id="GO:0005739">
    <property type="term" value="C:mitochondrion"/>
    <property type="evidence" value="ECO:0000269"/>
    <property type="project" value="PomBase"/>
</dbReference>
<dbReference type="GO" id="GO:0008494">
    <property type="term" value="F:translation activator activity"/>
    <property type="evidence" value="ECO:0000269"/>
    <property type="project" value="PomBase"/>
</dbReference>
<dbReference type="GO" id="GO:0045182">
    <property type="term" value="F:translation regulator activity"/>
    <property type="evidence" value="ECO:0000315"/>
    <property type="project" value="UniProtKB"/>
</dbReference>
<dbReference type="GO" id="GO:0032543">
    <property type="term" value="P:mitochondrial translation"/>
    <property type="evidence" value="ECO:0000269"/>
    <property type="project" value="PomBase"/>
</dbReference>
<dbReference type="GO" id="GO:0070124">
    <property type="term" value="P:mitochondrial translational initiation"/>
    <property type="evidence" value="ECO:0000315"/>
    <property type="project" value="UniProtKB"/>
</dbReference>
<dbReference type="GO" id="GO:0070131">
    <property type="term" value="P:positive regulation of mitochondrial translation"/>
    <property type="evidence" value="ECO:0000269"/>
    <property type="project" value="PomBase"/>
</dbReference>
<dbReference type="GO" id="GO:0000376">
    <property type="term" value="P:RNA splicing, via transesterification reactions with guanosine as nucleophile"/>
    <property type="evidence" value="ECO:0000269"/>
    <property type="project" value="PomBase"/>
</dbReference>
<dbReference type="InterPro" id="IPR043837">
    <property type="entry name" value="Mtf2-like_C"/>
</dbReference>
<dbReference type="InterPro" id="IPR040009">
    <property type="entry name" value="Mtf2/C5D6.12-like"/>
</dbReference>
<dbReference type="PANTHER" id="PTHR39468">
    <property type="entry name" value="CHROMOSOME 7, WHOLE GENOME SHOTGUN SEQUENCE"/>
    <property type="match status" value="1"/>
</dbReference>
<dbReference type="PANTHER" id="PTHR39468:SF1">
    <property type="entry name" value="MTF2-LIKE C-TERMINAL DOMAIN-CONTAINING PROTEIN"/>
    <property type="match status" value="1"/>
</dbReference>
<dbReference type="Pfam" id="PF19189">
    <property type="entry name" value="Mtf2"/>
    <property type="match status" value="1"/>
</dbReference>
<feature type="chain" id="PRO_0000116656" description="Mitochondrial translation factor 2">
    <location>
        <begin position="1"/>
        <end position="314"/>
    </location>
</feature>
<feature type="region of interest" description="Disordered" evidence="1">
    <location>
        <begin position="111"/>
        <end position="136"/>
    </location>
</feature>
<name>MITF2_SCHPO</name>
<sequence>MRVCRTLKISIKSFPSSLSLLSLYKRRLHKSTSHSSTATSSHYSKNNLPSDSPDLLFDYFIDGHKIHVNPNAVEPLHLRRNADVVGFSLPHGVKQSFENYIQKYPLSDQVENSSNIYDPSSPPDSPRKQQTHLGTIPPEHPDVFFHNLKKKLDSLHTHSSPLTVYRNHLLTCETDSALAQLFKSEIYQQLSDFRRDFPLSHALRDTMLIARLNFLNPMLALSFFQAVKKHSPNAYVRGCSAPVYNQAILSVWQGCKDPNFVLHLLGEMRENVVMRDSETREAINIVYKDVNEWPKQLLFSQNRILEKLKIFLLP</sequence>
<gene>
    <name evidence="4" type="primary">mtf2</name>
    <name type="ORF">SPAC5D6.12</name>
</gene>
<keyword id="KW-1185">Reference proteome</keyword>
<organism>
    <name type="scientific">Schizosaccharomyces pombe (strain 972 / ATCC 24843)</name>
    <name type="common">Fission yeast</name>
    <dbReference type="NCBI Taxonomy" id="284812"/>
    <lineage>
        <taxon>Eukaryota</taxon>
        <taxon>Fungi</taxon>
        <taxon>Dikarya</taxon>
        <taxon>Ascomycota</taxon>
        <taxon>Taphrinomycotina</taxon>
        <taxon>Schizosaccharomycetes</taxon>
        <taxon>Schizosaccharomycetales</taxon>
        <taxon>Schizosaccharomycetaceae</taxon>
        <taxon>Schizosaccharomyces</taxon>
    </lineage>
</organism>
<proteinExistence type="evidence at protein level"/>
<protein>
    <recommendedName>
        <fullName evidence="4">Mitochondrial translation factor 2</fullName>
    </recommendedName>
</protein>
<evidence type="ECO:0000256" key="1">
    <source>
        <dbReference type="SAM" id="MobiDB-lite"/>
    </source>
</evidence>
<evidence type="ECO:0000269" key="2">
    <source>
    </source>
</evidence>
<evidence type="ECO:0000269" key="3">
    <source>
    </source>
</evidence>
<evidence type="ECO:0000312" key="4">
    <source>
        <dbReference type="PomBase" id="SPAC5D6.12"/>
    </source>
</evidence>
<accession>O14204</accession>